<keyword id="KW-0067">ATP-binding</keyword>
<keyword id="KW-0238">DNA-binding</keyword>
<keyword id="KW-0479">Metal-binding</keyword>
<keyword id="KW-0547">Nucleotide-binding</keyword>
<keyword id="KW-0678">Repressor</keyword>
<keyword id="KW-0804">Transcription</keyword>
<keyword id="KW-0805">Transcription regulation</keyword>
<keyword id="KW-0862">Zinc</keyword>
<keyword id="KW-0863">Zinc-finger</keyword>
<dbReference type="EMBL" id="CP000733">
    <property type="protein sequence ID" value="ABS76797.1"/>
    <property type="molecule type" value="Genomic_DNA"/>
</dbReference>
<dbReference type="RefSeq" id="WP_005771735.1">
    <property type="nucleotide sequence ID" value="NC_009727.1"/>
</dbReference>
<dbReference type="SMR" id="A9KBN5"/>
<dbReference type="KEGG" id="cbd:CBUD_0578"/>
<dbReference type="HOGENOM" id="CLU_108412_0_0_6"/>
<dbReference type="Proteomes" id="UP000008555">
    <property type="component" value="Chromosome"/>
</dbReference>
<dbReference type="GO" id="GO:0005524">
    <property type="term" value="F:ATP binding"/>
    <property type="evidence" value="ECO:0007669"/>
    <property type="project" value="UniProtKB-KW"/>
</dbReference>
<dbReference type="GO" id="GO:0003677">
    <property type="term" value="F:DNA binding"/>
    <property type="evidence" value="ECO:0007669"/>
    <property type="project" value="UniProtKB-KW"/>
</dbReference>
<dbReference type="GO" id="GO:0008270">
    <property type="term" value="F:zinc ion binding"/>
    <property type="evidence" value="ECO:0007669"/>
    <property type="project" value="UniProtKB-UniRule"/>
</dbReference>
<dbReference type="GO" id="GO:0045892">
    <property type="term" value="P:negative regulation of DNA-templated transcription"/>
    <property type="evidence" value="ECO:0007669"/>
    <property type="project" value="UniProtKB-UniRule"/>
</dbReference>
<dbReference type="HAMAP" id="MF_00440">
    <property type="entry name" value="NrdR"/>
    <property type="match status" value="1"/>
</dbReference>
<dbReference type="InterPro" id="IPR005144">
    <property type="entry name" value="ATP-cone_dom"/>
</dbReference>
<dbReference type="InterPro" id="IPR055173">
    <property type="entry name" value="NrdR-like_N"/>
</dbReference>
<dbReference type="InterPro" id="IPR003796">
    <property type="entry name" value="RNR_NrdR-like"/>
</dbReference>
<dbReference type="NCBIfam" id="TIGR00244">
    <property type="entry name" value="transcriptional regulator NrdR"/>
    <property type="match status" value="1"/>
</dbReference>
<dbReference type="PANTHER" id="PTHR30455">
    <property type="entry name" value="TRANSCRIPTIONAL REPRESSOR NRDR"/>
    <property type="match status" value="1"/>
</dbReference>
<dbReference type="PANTHER" id="PTHR30455:SF2">
    <property type="entry name" value="TRANSCRIPTIONAL REPRESSOR NRDR"/>
    <property type="match status" value="1"/>
</dbReference>
<dbReference type="Pfam" id="PF03477">
    <property type="entry name" value="ATP-cone"/>
    <property type="match status" value="1"/>
</dbReference>
<dbReference type="Pfam" id="PF22811">
    <property type="entry name" value="Zn_ribbon_NrdR"/>
    <property type="match status" value="1"/>
</dbReference>
<dbReference type="PROSITE" id="PS51161">
    <property type="entry name" value="ATP_CONE"/>
    <property type="match status" value="1"/>
</dbReference>
<feature type="chain" id="PRO_1000080740" description="Transcriptional repressor NrdR">
    <location>
        <begin position="1"/>
        <end position="157"/>
    </location>
</feature>
<feature type="domain" description="ATP-cone" evidence="1">
    <location>
        <begin position="49"/>
        <end position="139"/>
    </location>
</feature>
<feature type="zinc finger region" evidence="1">
    <location>
        <begin position="3"/>
        <end position="34"/>
    </location>
</feature>
<evidence type="ECO:0000255" key="1">
    <source>
        <dbReference type="HAMAP-Rule" id="MF_00440"/>
    </source>
</evidence>
<protein>
    <recommendedName>
        <fullName evidence="1">Transcriptional repressor NrdR</fullName>
    </recommendedName>
</protein>
<gene>
    <name evidence="1" type="primary">nrdR</name>
    <name type="ordered locus">CBUD_0578</name>
</gene>
<organism>
    <name type="scientific">Coxiella burnetii (strain Dugway 5J108-111)</name>
    <dbReference type="NCBI Taxonomy" id="434922"/>
    <lineage>
        <taxon>Bacteria</taxon>
        <taxon>Pseudomonadati</taxon>
        <taxon>Pseudomonadota</taxon>
        <taxon>Gammaproteobacteria</taxon>
        <taxon>Legionellales</taxon>
        <taxon>Coxiellaceae</taxon>
        <taxon>Coxiella</taxon>
    </lineage>
</organism>
<proteinExistence type="inferred from homology"/>
<comment type="function">
    <text evidence="1">Negatively regulates transcription of bacterial ribonucleotide reductase nrd genes and operons by binding to NrdR-boxes.</text>
</comment>
<comment type="cofactor">
    <cofactor evidence="1">
        <name>Zn(2+)</name>
        <dbReference type="ChEBI" id="CHEBI:29105"/>
    </cofactor>
    <text evidence="1">Binds 1 zinc ion.</text>
</comment>
<comment type="similarity">
    <text evidence="1">Belongs to the NrdR family.</text>
</comment>
<name>NRDR_COXBN</name>
<accession>A9KBN5</accession>
<sequence length="157" mass="18579">MYCPFCNAEDTKVIDSRLVEEGTQVRRRRECLKCQERFTTFETAELNLPRIIKRDGRRSAFDEEKLRAGLLKALEKRPISTEQIETAVQRIIHKLRARGECEVSSQWLGELVMDELRALDEVAYVRFASVYRSFQDINAFRDEIRRLQKQQKKSHDK</sequence>
<reference key="1">
    <citation type="journal article" date="2009" name="Infect. Immun.">
        <title>Comparative genomics reveal extensive transposon-mediated genomic plasticity and diversity among potential effector proteins within the genus Coxiella.</title>
        <authorList>
            <person name="Beare P.A."/>
            <person name="Unsworth N."/>
            <person name="Andoh M."/>
            <person name="Voth D.E."/>
            <person name="Omsland A."/>
            <person name="Gilk S.D."/>
            <person name="Williams K.P."/>
            <person name="Sobral B.W."/>
            <person name="Kupko J.J. III"/>
            <person name="Porcella S.F."/>
            <person name="Samuel J.E."/>
            <person name="Heinzen R.A."/>
        </authorList>
    </citation>
    <scope>NUCLEOTIDE SEQUENCE [LARGE SCALE GENOMIC DNA]</scope>
    <source>
        <strain>Dugway 5J108-111</strain>
    </source>
</reference>